<accession>Q5BG98</accession>
<accession>C8VTF0</accession>
<organism>
    <name type="scientific">Emericella nidulans (strain FGSC A4 / ATCC 38163 / CBS 112.46 / NRRL 194 / M139)</name>
    <name type="common">Aspergillus nidulans</name>
    <dbReference type="NCBI Taxonomy" id="227321"/>
    <lineage>
        <taxon>Eukaryota</taxon>
        <taxon>Fungi</taxon>
        <taxon>Dikarya</taxon>
        <taxon>Ascomycota</taxon>
        <taxon>Pezizomycotina</taxon>
        <taxon>Eurotiomycetes</taxon>
        <taxon>Eurotiomycetidae</taxon>
        <taxon>Eurotiales</taxon>
        <taxon>Aspergillaceae</taxon>
        <taxon>Aspergillus</taxon>
        <taxon>Aspergillus subgen. Nidulantes</taxon>
    </lineage>
</organism>
<feature type="chain" id="PRO_0000330181" description="NADH-cytochrome b5 reductase 2">
    <location>
        <begin position="1"/>
        <end position="322"/>
    </location>
</feature>
<feature type="transmembrane region" description="Helical" evidence="2">
    <location>
        <begin position="30"/>
        <end position="46"/>
    </location>
</feature>
<feature type="domain" description="FAD-binding FR-type" evidence="3">
    <location>
        <begin position="71"/>
        <end position="176"/>
    </location>
</feature>
<feature type="binding site" evidence="1">
    <location>
        <begin position="179"/>
        <end position="214"/>
    </location>
    <ligand>
        <name>FAD</name>
        <dbReference type="ChEBI" id="CHEBI:57692"/>
    </ligand>
</feature>
<keyword id="KW-0274">FAD</keyword>
<keyword id="KW-0285">Flavoprotein</keyword>
<keyword id="KW-0472">Membrane</keyword>
<keyword id="KW-0496">Mitochondrion</keyword>
<keyword id="KW-1000">Mitochondrion outer membrane</keyword>
<keyword id="KW-0520">NAD</keyword>
<keyword id="KW-0560">Oxidoreductase</keyword>
<keyword id="KW-1185">Reference proteome</keyword>
<keyword id="KW-0812">Transmembrane</keyword>
<keyword id="KW-1133">Transmembrane helix</keyword>
<sequence>MFSRYAFRCAQPLRQSARQYSTEAPKSKSLAPVYVAVGLAGLGVGLYRYQSGAATAEAPAERPKVFTGGDQGWVNLKLSDIEILSHNTKRLRFEFPDKEAVSGLHIASALLTKYSPPDGSKPVIRPYTPTSDEDQPGYLELVVKRYPNGPMSEHLHNMNVDQRLDFKGPLPKYPWEANKHKHICLVAGGTGITPMYQLAREIFKNPEDKTKVTLVFGNVSEEDILLKREFEDLENTYPQRFRAFYVLDNPPEGWTGGKGYITKELLKTVLPEPKEENIKIFVCGPPGMYKAISGPKVSPKDQGELTGILKELGYSKDQVYKF</sequence>
<protein>
    <recommendedName>
        <fullName>NADH-cytochrome b5 reductase 2</fullName>
        <ecNumber>1.6.2.2</ecNumber>
    </recommendedName>
    <alternativeName>
        <fullName>Mitochondrial cytochrome b reductase</fullName>
    </alternativeName>
</protein>
<name>MCR1_EMENI</name>
<evidence type="ECO:0000250" key="1"/>
<evidence type="ECO:0000255" key="2"/>
<evidence type="ECO:0000255" key="3">
    <source>
        <dbReference type="PROSITE-ProRule" id="PRU00716"/>
    </source>
</evidence>
<evidence type="ECO:0000305" key="4"/>
<comment type="function">
    <text evidence="1">May mediate the reduction of outer membrane cytochrome b5.</text>
</comment>
<comment type="catalytic activity">
    <reaction>
        <text>2 Fe(III)-[cytochrome b5] + NADH = 2 Fe(II)-[cytochrome b5] + NAD(+) + H(+)</text>
        <dbReference type="Rhea" id="RHEA:46680"/>
        <dbReference type="Rhea" id="RHEA-COMP:10438"/>
        <dbReference type="Rhea" id="RHEA-COMP:10439"/>
        <dbReference type="ChEBI" id="CHEBI:15378"/>
        <dbReference type="ChEBI" id="CHEBI:29033"/>
        <dbReference type="ChEBI" id="CHEBI:29034"/>
        <dbReference type="ChEBI" id="CHEBI:57540"/>
        <dbReference type="ChEBI" id="CHEBI:57945"/>
        <dbReference type="EC" id="1.6.2.2"/>
    </reaction>
</comment>
<comment type="cofactor">
    <cofactor evidence="1">
        <name>FAD</name>
        <dbReference type="ChEBI" id="CHEBI:57692"/>
    </cofactor>
</comment>
<comment type="subcellular location">
    <subcellularLocation>
        <location evidence="1">Mitochondrion outer membrane</location>
        <topology evidence="1">Single-pass membrane protein</topology>
    </subcellularLocation>
</comment>
<comment type="similarity">
    <text evidence="4">Belongs to the flavoprotein pyridine nucleotide cytochrome reductase family.</text>
</comment>
<proteinExistence type="inferred from homology"/>
<gene>
    <name type="primary">mcr1</name>
    <name type="ORF">AN0432</name>
</gene>
<reference key="1">
    <citation type="journal article" date="2005" name="Nature">
        <title>Sequencing of Aspergillus nidulans and comparative analysis with A. fumigatus and A. oryzae.</title>
        <authorList>
            <person name="Galagan J.E."/>
            <person name="Calvo S.E."/>
            <person name="Cuomo C."/>
            <person name="Ma L.-J."/>
            <person name="Wortman J.R."/>
            <person name="Batzoglou S."/>
            <person name="Lee S.-I."/>
            <person name="Bastuerkmen M."/>
            <person name="Spevak C.C."/>
            <person name="Clutterbuck J."/>
            <person name="Kapitonov V."/>
            <person name="Jurka J."/>
            <person name="Scazzocchio C."/>
            <person name="Farman M.L."/>
            <person name="Butler J."/>
            <person name="Purcell S."/>
            <person name="Harris S."/>
            <person name="Braus G.H."/>
            <person name="Draht O."/>
            <person name="Busch S."/>
            <person name="D'Enfert C."/>
            <person name="Bouchier C."/>
            <person name="Goldman G.H."/>
            <person name="Bell-Pedersen D."/>
            <person name="Griffiths-Jones S."/>
            <person name="Doonan J.H."/>
            <person name="Yu J."/>
            <person name="Vienken K."/>
            <person name="Pain A."/>
            <person name="Freitag M."/>
            <person name="Selker E.U."/>
            <person name="Archer D.B."/>
            <person name="Penalva M.A."/>
            <person name="Oakley B.R."/>
            <person name="Momany M."/>
            <person name="Tanaka T."/>
            <person name="Kumagai T."/>
            <person name="Asai K."/>
            <person name="Machida M."/>
            <person name="Nierman W.C."/>
            <person name="Denning D.W."/>
            <person name="Caddick M.X."/>
            <person name="Hynes M."/>
            <person name="Paoletti M."/>
            <person name="Fischer R."/>
            <person name="Miller B.L."/>
            <person name="Dyer P.S."/>
            <person name="Sachs M.S."/>
            <person name="Osmani S.A."/>
            <person name="Birren B.W."/>
        </authorList>
    </citation>
    <scope>NUCLEOTIDE SEQUENCE [LARGE SCALE GENOMIC DNA]</scope>
    <source>
        <strain>FGSC A4 / ATCC 38163 / CBS 112.46 / NRRL 194 / M139</strain>
    </source>
</reference>
<reference key="2">
    <citation type="journal article" date="2009" name="Fungal Genet. Biol.">
        <title>The 2008 update of the Aspergillus nidulans genome annotation: a community effort.</title>
        <authorList>
            <person name="Wortman J.R."/>
            <person name="Gilsenan J.M."/>
            <person name="Joardar V."/>
            <person name="Deegan J."/>
            <person name="Clutterbuck J."/>
            <person name="Andersen M.R."/>
            <person name="Archer D."/>
            <person name="Bencina M."/>
            <person name="Braus G."/>
            <person name="Coutinho P."/>
            <person name="von Dohren H."/>
            <person name="Doonan J."/>
            <person name="Driessen A.J."/>
            <person name="Durek P."/>
            <person name="Espeso E."/>
            <person name="Fekete E."/>
            <person name="Flipphi M."/>
            <person name="Estrada C.G."/>
            <person name="Geysens S."/>
            <person name="Goldman G."/>
            <person name="de Groot P.W."/>
            <person name="Hansen K."/>
            <person name="Harris S.D."/>
            <person name="Heinekamp T."/>
            <person name="Helmstaedt K."/>
            <person name="Henrissat B."/>
            <person name="Hofmann G."/>
            <person name="Homan T."/>
            <person name="Horio T."/>
            <person name="Horiuchi H."/>
            <person name="James S."/>
            <person name="Jones M."/>
            <person name="Karaffa L."/>
            <person name="Karanyi Z."/>
            <person name="Kato M."/>
            <person name="Keller N."/>
            <person name="Kelly D.E."/>
            <person name="Kiel J.A."/>
            <person name="Kim J.M."/>
            <person name="van der Klei I.J."/>
            <person name="Klis F.M."/>
            <person name="Kovalchuk A."/>
            <person name="Krasevec N."/>
            <person name="Kubicek C.P."/>
            <person name="Liu B."/>
            <person name="Maccabe A."/>
            <person name="Meyer V."/>
            <person name="Mirabito P."/>
            <person name="Miskei M."/>
            <person name="Mos M."/>
            <person name="Mullins J."/>
            <person name="Nelson D.R."/>
            <person name="Nielsen J."/>
            <person name="Oakley B.R."/>
            <person name="Osmani S.A."/>
            <person name="Pakula T."/>
            <person name="Paszewski A."/>
            <person name="Paulsen I."/>
            <person name="Pilsyk S."/>
            <person name="Pocsi I."/>
            <person name="Punt P.J."/>
            <person name="Ram A.F."/>
            <person name="Ren Q."/>
            <person name="Robellet X."/>
            <person name="Robson G."/>
            <person name="Seiboth B."/>
            <person name="van Solingen P."/>
            <person name="Specht T."/>
            <person name="Sun J."/>
            <person name="Taheri-Talesh N."/>
            <person name="Takeshita N."/>
            <person name="Ussery D."/>
            <person name="vanKuyk P.A."/>
            <person name="Visser H."/>
            <person name="van de Vondervoort P.J."/>
            <person name="de Vries R.P."/>
            <person name="Walton J."/>
            <person name="Xiang X."/>
            <person name="Xiong Y."/>
            <person name="Zeng A.P."/>
            <person name="Brandt B.W."/>
            <person name="Cornell M.J."/>
            <person name="van den Hondel C.A."/>
            <person name="Visser J."/>
            <person name="Oliver S.G."/>
            <person name="Turner G."/>
        </authorList>
    </citation>
    <scope>GENOME REANNOTATION</scope>
    <source>
        <strain>FGSC A4 / ATCC 38163 / CBS 112.46 / NRRL 194 / M139</strain>
    </source>
</reference>
<dbReference type="EC" id="1.6.2.2"/>
<dbReference type="EMBL" id="AACD01000007">
    <property type="protein sequence ID" value="EAA66531.1"/>
    <property type="molecule type" value="Genomic_DNA"/>
</dbReference>
<dbReference type="EMBL" id="BN001308">
    <property type="protein sequence ID" value="CBF89495.1"/>
    <property type="molecule type" value="Genomic_DNA"/>
</dbReference>
<dbReference type="RefSeq" id="XP_658036.1">
    <property type="nucleotide sequence ID" value="XM_652944.1"/>
</dbReference>
<dbReference type="SMR" id="Q5BG98"/>
<dbReference type="FunCoup" id="Q5BG98">
    <property type="interactions" value="312"/>
</dbReference>
<dbReference type="STRING" id="227321.Q5BG98"/>
<dbReference type="EnsemblFungi" id="CBF89495">
    <property type="protein sequence ID" value="CBF89495"/>
    <property type="gene ID" value="ANIA_00432"/>
</dbReference>
<dbReference type="KEGG" id="ani:ANIA_00432"/>
<dbReference type="VEuPathDB" id="FungiDB:AN0432"/>
<dbReference type="eggNOG" id="KOG0534">
    <property type="taxonomic scope" value="Eukaryota"/>
</dbReference>
<dbReference type="HOGENOM" id="CLU_003827_9_1_1"/>
<dbReference type="InParanoid" id="Q5BG98"/>
<dbReference type="OMA" id="KGPEMQK"/>
<dbReference type="OrthoDB" id="432685at2759"/>
<dbReference type="Proteomes" id="UP000000560">
    <property type="component" value="Chromosome VIII"/>
</dbReference>
<dbReference type="GO" id="GO:0005741">
    <property type="term" value="C:mitochondrial outer membrane"/>
    <property type="evidence" value="ECO:0007669"/>
    <property type="project" value="UniProtKB-SubCell"/>
</dbReference>
<dbReference type="GO" id="GO:0004128">
    <property type="term" value="F:cytochrome-b5 reductase activity, acting on NAD(P)H"/>
    <property type="evidence" value="ECO:0000318"/>
    <property type="project" value="GO_Central"/>
</dbReference>
<dbReference type="GO" id="GO:0006696">
    <property type="term" value="P:ergosterol biosynthetic process"/>
    <property type="evidence" value="ECO:0000318"/>
    <property type="project" value="GO_Central"/>
</dbReference>
<dbReference type="CDD" id="cd06183">
    <property type="entry name" value="cyt_b5_reduct_like"/>
    <property type="match status" value="1"/>
</dbReference>
<dbReference type="FunFam" id="2.40.30.10:FF:000032">
    <property type="entry name" value="NADH-cytochrome b5 reductase"/>
    <property type="match status" value="1"/>
</dbReference>
<dbReference type="FunFam" id="3.40.50.80:FF:000009">
    <property type="entry name" value="NADH-cytochrome b5 reductase"/>
    <property type="match status" value="1"/>
</dbReference>
<dbReference type="Gene3D" id="3.40.50.80">
    <property type="entry name" value="Nucleotide-binding domain of ferredoxin-NADP reductase (FNR) module"/>
    <property type="match status" value="1"/>
</dbReference>
<dbReference type="Gene3D" id="2.40.30.10">
    <property type="entry name" value="Translation factors"/>
    <property type="match status" value="1"/>
</dbReference>
<dbReference type="InterPro" id="IPR001834">
    <property type="entry name" value="CBR-like"/>
</dbReference>
<dbReference type="InterPro" id="IPR008333">
    <property type="entry name" value="Cbr1-like_FAD-bd_dom"/>
</dbReference>
<dbReference type="InterPro" id="IPR017927">
    <property type="entry name" value="FAD-bd_FR_type"/>
</dbReference>
<dbReference type="InterPro" id="IPR001709">
    <property type="entry name" value="Flavoprot_Pyr_Nucl_cyt_Rdtase"/>
</dbReference>
<dbReference type="InterPro" id="IPR039261">
    <property type="entry name" value="FNR_nucleotide-bd"/>
</dbReference>
<dbReference type="InterPro" id="IPR001433">
    <property type="entry name" value="OxRdtase_FAD/NAD-bd"/>
</dbReference>
<dbReference type="InterPro" id="IPR017938">
    <property type="entry name" value="Riboflavin_synthase-like_b-brl"/>
</dbReference>
<dbReference type="PANTHER" id="PTHR19370">
    <property type="entry name" value="NADH-CYTOCHROME B5 REDUCTASE"/>
    <property type="match status" value="1"/>
</dbReference>
<dbReference type="PANTHER" id="PTHR19370:SF171">
    <property type="entry name" value="NADH-CYTOCHROME B5 REDUCTASE 2"/>
    <property type="match status" value="1"/>
</dbReference>
<dbReference type="Pfam" id="PF00970">
    <property type="entry name" value="FAD_binding_6"/>
    <property type="match status" value="1"/>
</dbReference>
<dbReference type="Pfam" id="PF00175">
    <property type="entry name" value="NAD_binding_1"/>
    <property type="match status" value="1"/>
</dbReference>
<dbReference type="PRINTS" id="PR00406">
    <property type="entry name" value="CYTB5RDTASE"/>
</dbReference>
<dbReference type="PRINTS" id="PR00371">
    <property type="entry name" value="FPNCR"/>
</dbReference>
<dbReference type="SUPFAM" id="SSF52343">
    <property type="entry name" value="Ferredoxin reductase-like, C-terminal NADP-linked domain"/>
    <property type="match status" value="1"/>
</dbReference>
<dbReference type="SUPFAM" id="SSF63380">
    <property type="entry name" value="Riboflavin synthase domain-like"/>
    <property type="match status" value="1"/>
</dbReference>
<dbReference type="PROSITE" id="PS51384">
    <property type="entry name" value="FAD_FR"/>
    <property type="match status" value="1"/>
</dbReference>